<name>DNAK_RHILW</name>
<dbReference type="EMBL" id="CP001191">
    <property type="protein sequence ID" value="ACI57358.1"/>
    <property type="molecule type" value="Genomic_DNA"/>
</dbReference>
<dbReference type="RefSeq" id="WP_003589308.1">
    <property type="nucleotide sequence ID" value="NC_011369.1"/>
</dbReference>
<dbReference type="SMR" id="B5ZWQ2"/>
<dbReference type="STRING" id="395492.Rleg2_4096"/>
<dbReference type="KEGG" id="rlt:Rleg2_4096"/>
<dbReference type="eggNOG" id="COG0443">
    <property type="taxonomic scope" value="Bacteria"/>
</dbReference>
<dbReference type="HOGENOM" id="CLU_005965_2_1_5"/>
<dbReference type="Proteomes" id="UP000008330">
    <property type="component" value="Chromosome"/>
</dbReference>
<dbReference type="GO" id="GO:0005524">
    <property type="term" value="F:ATP binding"/>
    <property type="evidence" value="ECO:0007669"/>
    <property type="project" value="UniProtKB-UniRule"/>
</dbReference>
<dbReference type="GO" id="GO:0140662">
    <property type="term" value="F:ATP-dependent protein folding chaperone"/>
    <property type="evidence" value="ECO:0007669"/>
    <property type="project" value="InterPro"/>
</dbReference>
<dbReference type="GO" id="GO:0051082">
    <property type="term" value="F:unfolded protein binding"/>
    <property type="evidence" value="ECO:0007669"/>
    <property type="project" value="InterPro"/>
</dbReference>
<dbReference type="CDD" id="cd11733">
    <property type="entry name" value="ASKHA_NBD_HSP70_HSPA9"/>
    <property type="match status" value="1"/>
</dbReference>
<dbReference type="FunFam" id="2.60.34.10:FF:000014">
    <property type="entry name" value="Chaperone protein DnaK HSP70"/>
    <property type="match status" value="1"/>
</dbReference>
<dbReference type="FunFam" id="3.30.420.40:FF:000020">
    <property type="entry name" value="Chaperone protein HscA homolog"/>
    <property type="match status" value="1"/>
</dbReference>
<dbReference type="FunFam" id="1.20.1270.10:FF:000001">
    <property type="entry name" value="Molecular chaperone DnaK"/>
    <property type="match status" value="1"/>
</dbReference>
<dbReference type="FunFam" id="3.30.420.40:FF:000004">
    <property type="entry name" value="Molecular chaperone DnaK"/>
    <property type="match status" value="1"/>
</dbReference>
<dbReference type="FunFam" id="3.90.640.10:FF:000003">
    <property type="entry name" value="Molecular chaperone DnaK"/>
    <property type="match status" value="1"/>
</dbReference>
<dbReference type="Gene3D" id="1.20.1270.10">
    <property type="match status" value="1"/>
</dbReference>
<dbReference type="Gene3D" id="3.30.420.40">
    <property type="match status" value="2"/>
</dbReference>
<dbReference type="Gene3D" id="3.90.640.10">
    <property type="entry name" value="Actin, Chain A, domain 4"/>
    <property type="match status" value="1"/>
</dbReference>
<dbReference type="Gene3D" id="2.60.34.10">
    <property type="entry name" value="Substrate Binding Domain Of DNAk, Chain A, domain 1"/>
    <property type="match status" value="1"/>
</dbReference>
<dbReference type="HAMAP" id="MF_00332">
    <property type="entry name" value="DnaK"/>
    <property type="match status" value="1"/>
</dbReference>
<dbReference type="InterPro" id="IPR043129">
    <property type="entry name" value="ATPase_NBD"/>
</dbReference>
<dbReference type="InterPro" id="IPR012725">
    <property type="entry name" value="Chaperone_DnaK"/>
</dbReference>
<dbReference type="InterPro" id="IPR018181">
    <property type="entry name" value="Heat_shock_70_CS"/>
</dbReference>
<dbReference type="InterPro" id="IPR029048">
    <property type="entry name" value="HSP70_C_sf"/>
</dbReference>
<dbReference type="InterPro" id="IPR029047">
    <property type="entry name" value="HSP70_peptide-bd_sf"/>
</dbReference>
<dbReference type="InterPro" id="IPR013126">
    <property type="entry name" value="Hsp_70_fam"/>
</dbReference>
<dbReference type="NCBIfam" id="NF001413">
    <property type="entry name" value="PRK00290.1"/>
    <property type="match status" value="1"/>
</dbReference>
<dbReference type="NCBIfam" id="NF003520">
    <property type="entry name" value="PRK05183.1"/>
    <property type="match status" value="1"/>
</dbReference>
<dbReference type="NCBIfam" id="TIGR02350">
    <property type="entry name" value="prok_dnaK"/>
    <property type="match status" value="1"/>
</dbReference>
<dbReference type="PANTHER" id="PTHR19375">
    <property type="entry name" value="HEAT SHOCK PROTEIN 70KDA"/>
    <property type="match status" value="1"/>
</dbReference>
<dbReference type="Pfam" id="PF00012">
    <property type="entry name" value="HSP70"/>
    <property type="match status" value="1"/>
</dbReference>
<dbReference type="PRINTS" id="PR00301">
    <property type="entry name" value="HEATSHOCK70"/>
</dbReference>
<dbReference type="SUPFAM" id="SSF53067">
    <property type="entry name" value="Actin-like ATPase domain"/>
    <property type="match status" value="2"/>
</dbReference>
<dbReference type="SUPFAM" id="SSF100934">
    <property type="entry name" value="Heat shock protein 70kD (HSP70), C-terminal subdomain"/>
    <property type="match status" value="1"/>
</dbReference>
<dbReference type="SUPFAM" id="SSF100920">
    <property type="entry name" value="Heat shock protein 70kD (HSP70), peptide-binding domain"/>
    <property type="match status" value="1"/>
</dbReference>
<dbReference type="PROSITE" id="PS00297">
    <property type="entry name" value="HSP70_1"/>
    <property type="match status" value="1"/>
</dbReference>
<dbReference type="PROSITE" id="PS00329">
    <property type="entry name" value="HSP70_2"/>
    <property type="match status" value="1"/>
</dbReference>
<dbReference type="PROSITE" id="PS01036">
    <property type="entry name" value="HSP70_3"/>
    <property type="match status" value="1"/>
</dbReference>
<gene>
    <name evidence="1" type="primary">dnaK</name>
    <name type="ordered locus">Rleg2_4096</name>
</gene>
<keyword id="KW-0067">ATP-binding</keyword>
<keyword id="KW-0143">Chaperone</keyword>
<keyword id="KW-0547">Nucleotide-binding</keyword>
<keyword id="KW-0597">Phosphoprotein</keyword>
<keyword id="KW-1185">Reference proteome</keyword>
<keyword id="KW-0346">Stress response</keyword>
<protein>
    <recommendedName>
        <fullName evidence="1">Chaperone protein DnaK</fullName>
    </recommendedName>
    <alternativeName>
        <fullName evidence="1">HSP70</fullName>
    </alternativeName>
    <alternativeName>
        <fullName evidence="1">Heat shock 70 kDa protein</fullName>
    </alternativeName>
    <alternativeName>
        <fullName evidence="1">Heat shock protein 70</fullName>
    </alternativeName>
</protein>
<proteinExistence type="inferred from homology"/>
<comment type="function">
    <text evidence="1">Acts as a chaperone.</text>
</comment>
<comment type="induction">
    <text evidence="1">By stress conditions e.g. heat shock.</text>
</comment>
<comment type="similarity">
    <text evidence="1">Belongs to the heat shock protein 70 family.</text>
</comment>
<feature type="chain" id="PRO_1000119746" description="Chaperone protein DnaK">
    <location>
        <begin position="1"/>
        <end position="639"/>
    </location>
</feature>
<feature type="region of interest" description="Disordered" evidence="2">
    <location>
        <begin position="516"/>
        <end position="542"/>
    </location>
</feature>
<feature type="region of interest" description="Disordered" evidence="2">
    <location>
        <begin position="605"/>
        <end position="639"/>
    </location>
</feature>
<feature type="compositionally biased region" description="Basic and acidic residues" evidence="2">
    <location>
        <begin position="516"/>
        <end position="529"/>
    </location>
</feature>
<feature type="compositionally biased region" description="Low complexity" evidence="2">
    <location>
        <begin position="605"/>
        <end position="619"/>
    </location>
</feature>
<feature type="modified residue" description="Phosphothreonine; by autocatalysis" evidence="1">
    <location>
        <position position="198"/>
    </location>
</feature>
<sequence>MAKVIGIDLGTTNSCVAVMDGKDAKVIENAEGARTTPSMVAFSDDGERLVGQPAKRQAVTNPTNTLFAVKRLIGRRYEDPTVEKDKHLVPFTIVKGDNGDAWVEANGKGYSPAQISAMILQKMKETAESYLGEKVEKAVITVPAYFNDAQRQATKDAGRIAGLEVLRIINEPTAAALAYGLDKKEGKTIAVYDLGGGTFDISILEIGDGVFEVKSTNGDTFLGGEDFDMRLVEYLVGEFKRDNGIDLKNDKLALQRLKEAAEKAKIELSSSQQTEINLPFITADASGPKHLTLKLTRAKLESLVDDLVQRTIAPCKAALKDAGVTAAEIDEVVLVGGMSRMPKVQEVVKQLFGKEPHKGVNPDEVVALGAAIQAGVLQGDVKDVLLLDVTPLSLGIETLGGVFTRLIERNTTIPTKKSQTFSTAEDNQQAVTIRVSQGEREMAADNKLLGQFDLVGLPPSPRGMPQIEVTFDIDANGIVQVSAKDKGTGKEQQIRIQASGGLSDADIEKMVKDAEAHATEDKKRREAVEARNQAESLIHSTEKSLKDYGDKVSEADRTAISDAIAALKTASEATEPDADDIKAKTQTLMEVSMKLGQAIYEAQQAEGGAAAGDASAEGGDNVVDADYEEIKDDDRKKSA</sequence>
<evidence type="ECO:0000255" key="1">
    <source>
        <dbReference type="HAMAP-Rule" id="MF_00332"/>
    </source>
</evidence>
<evidence type="ECO:0000256" key="2">
    <source>
        <dbReference type="SAM" id="MobiDB-lite"/>
    </source>
</evidence>
<reference key="1">
    <citation type="journal article" date="2010" name="Stand. Genomic Sci.">
        <title>Complete genome sequence of Rhizobium leguminosarum bv trifolii strain WSM2304, an effective microsymbiont of the South American clover Trifolium polymorphum.</title>
        <authorList>
            <person name="Reeve W."/>
            <person name="O'Hara G."/>
            <person name="Chain P."/>
            <person name="Ardley J."/>
            <person name="Brau L."/>
            <person name="Nandesena K."/>
            <person name="Tiwari R."/>
            <person name="Malfatti S."/>
            <person name="Kiss H."/>
            <person name="Lapidus A."/>
            <person name="Copeland A."/>
            <person name="Nolan M."/>
            <person name="Land M."/>
            <person name="Ivanova N."/>
            <person name="Mavromatis K."/>
            <person name="Markowitz V."/>
            <person name="Kyrpides N."/>
            <person name="Melino V."/>
            <person name="Denton M."/>
            <person name="Yates R."/>
            <person name="Howieson J."/>
        </authorList>
    </citation>
    <scope>NUCLEOTIDE SEQUENCE [LARGE SCALE GENOMIC DNA]</scope>
    <source>
        <strain>WSM2304</strain>
    </source>
</reference>
<organism>
    <name type="scientific">Rhizobium leguminosarum bv. trifolii (strain WSM2304)</name>
    <dbReference type="NCBI Taxonomy" id="395492"/>
    <lineage>
        <taxon>Bacteria</taxon>
        <taxon>Pseudomonadati</taxon>
        <taxon>Pseudomonadota</taxon>
        <taxon>Alphaproteobacteria</taxon>
        <taxon>Hyphomicrobiales</taxon>
        <taxon>Rhizobiaceae</taxon>
        <taxon>Rhizobium/Agrobacterium group</taxon>
        <taxon>Rhizobium</taxon>
    </lineage>
</organism>
<accession>B5ZWQ2</accession>